<organism>
    <name type="scientific">Burkholderia orbicola (strain MC0-3)</name>
    <dbReference type="NCBI Taxonomy" id="406425"/>
    <lineage>
        <taxon>Bacteria</taxon>
        <taxon>Pseudomonadati</taxon>
        <taxon>Pseudomonadota</taxon>
        <taxon>Betaproteobacteria</taxon>
        <taxon>Burkholderiales</taxon>
        <taxon>Burkholderiaceae</taxon>
        <taxon>Burkholderia</taxon>
        <taxon>Burkholderia cepacia complex</taxon>
        <taxon>Burkholderia orbicola</taxon>
    </lineage>
</organism>
<gene>
    <name evidence="1" type="primary">ppnP</name>
    <name type="ordered locus">Bcenmc03_5759</name>
</gene>
<accession>B1K3J6</accession>
<sequence length="106" mass="11608">MTSATQFDNVSVVKRANVYFDGKCVSHTVLFPDGTRKTLGVILPCALNFGTDAPELMEVQAGKCRVKLDGSSEWQTYGAGESFSVPGKSRFDIEVLETLDYVCSYL</sequence>
<evidence type="ECO:0000255" key="1">
    <source>
        <dbReference type="HAMAP-Rule" id="MF_01537"/>
    </source>
</evidence>
<protein>
    <recommendedName>
        <fullName evidence="1">Pyrimidine/purine nucleoside phosphorylase</fullName>
        <ecNumber evidence="1">2.4.2.1</ecNumber>
        <ecNumber evidence="1">2.4.2.2</ecNumber>
    </recommendedName>
    <alternativeName>
        <fullName evidence="1">Adenosine phosphorylase</fullName>
    </alternativeName>
    <alternativeName>
        <fullName evidence="1">Cytidine phosphorylase</fullName>
    </alternativeName>
    <alternativeName>
        <fullName evidence="1">Guanosine phosphorylase</fullName>
    </alternativeName>
    <alternativeName>
        <fullName evidence="1">Inosine phosphorylase</fullName>
    </alternativeName>
    <alternativeName>
        <fullName evidence="1">Thymidine phosphorylase</fullName>
    </alternativeName>
    <alternativeName>
        <fullName evidence="1">Uridine phosphorylase</fullName>
    </alternativeName>
    <alternativeName>
        <fullName evidence="1">Xanthosine phosphorylase</fullName>
    </alternativeName>
</protein>
<proteinExistence type="inferred from homology"/>
<name>PPNP_BURO0</name>
<keyword id="KW-0328">Glycosyltransferase</keyword>
<keyword id="KW-0808">Transferase</keyword>
<feature type="chain" id="PRO_1000198649" description="Pyrimidine/purine nucleoside phosphorylase">
    <location>
        <begin position="1"/>
        <end position="106"/>
    </location>
</feature>
<dbReference type="EC" id="2.4.2.1" evidence="1"/>
<dbReference type="EC" id="2.4.2.2" evidence="1"/>
<dbReference type="EMBL" id="CP000959">
    <property type="protein sequence ID" value="ACA94881.1"/>
    <property type="molecule type" value="Genomic_DNA"/>
</dbReference>
<dbReference type="RefSeq" id="WP_006478890.1">
    <property type="nucleotide sequence ID" value="NC_010515.1"/>
</dbReference>
<dbReference type="SMR" id="B1K3J6"/>
<dbReference type="KEGG" id="bcm:Bcenmc03_5759"/>
<dbReference type="HOGENOM" id="CLU_157874_1_0_4"/>
<dbReference type="Proteomes" id="UP000002169">
    <property type="component" value="Chromosome 2"/>
</dbReference>
<dbReference type="GO" id="GO:0005829">
    <property type="term" value="C:cytosol"/>
    <property type="evidence" value="ECO:0007669"/>
    <property type="project" value="TreeGrafter"/>
</dbReference>
<dbReference type="GO" id="GO:0047975">
    <property type="term" value="F:guanosine phosphorylase activity"/>
    <property type="evidence" value="ECO:0007669"/>
    <property type="project" value="UniProtKB-EC"/>
</dbReference>
<dbReference type="GO" id="GO:0004731">
    <property type="term" value="F:purine-nucleoside phosphorylase activity"/>
    <property type="evidence" value="ECO:0007669"/>
    <property type="project" value="UniProtKB-UniRule"/>
</dbReference>
<dbReference type="GO" id="GO:0009032">
    <property type="term" value="F:thymidine phosphorylase activity"/>
    <property type="evidence" value="ECO:0007669"/>
    <property type="project" value="UniProtKB-EC"/>
</dbReference>
<dbReference type="GO" id="GO:0004850">
    <property type="term" value="F:uridine phosphorylase activity"/>
    <property type="evidence" value="ECO:0007669"/>
    <property type="project" value="UniProtKB-EC"/>
</dbReference>
<dbReference type="CDD" id="cd20296">
    <property type="entry name" value="cupin_PpnP-like"/>
    <property type="match status" value="1"/>
</dbReference>
<dbReference type="Gene3D" id="2.60.120.10">
    <property type="entry name" value="Jelly Rolls"/>
    <property type="match status" value="1"/>
</dbReference>
<dbReference type="HAMAP" id="MF_01537">
    <property type="entry name" value="Nucleos_phosphorylase_PpnP"/>
    <property type="match status" value="1"/>
</dbReference>
<dbReference type="InterPro" id="IPR009664">
    <property type="entry name" value="Ppnp"/>
</dbReference>
<dbReference type="InterPro" id="IPR014710">
    <property type="entry name" value="RmlC-like_jellyroll"/>
</dbReference>
<dbReference type="InterPro" id="IPR011051">
    <property type="entry name" value="RmlC_Cupin_sf"/>
</dbReference>
<dbReference type="PANTHER" id="PTHR36540">
    <property type="entry name" value="PYRIMIDINE/PURINE NUCLEOSIDE PHOSPHORYLASE"/>
    <property type="match status" value="1"/>
</dbReference>
<dbReference type="PANTHER" id="PTHR36540:SF1">
    <property type="entry name" value="PYRIMIDINE_PURINE NUCLEOSIDE PHOSPHORYLASE"/>
    <property type="match status" value="1"/>
</dbReference>
<dbReference type="Pfam" id="PF06865">
    <property type="entry name" value="Ppnp"/>
    <property type="match status" value="1"/>
</dbReference>
<dbReference type="SUPFAM" id="SSF51182">
    <property type="entry name" value="RmlC-like cupins"/>
    <property type="match status" value="1"/>
</dbReference>
<reference key="1">
    <citation type="submission" date="2008-02" db="EMBL/GenBank/DDBJ databases">
        <title>Complete sequence of chromosome 2 of Burkholderia cenocepacia MC0-3.</title>
        <authorList>
            <person name="Copeland A."/>
            <person name="Lucas S."/>
            <person name="Lapidus A."/>
            <person name="Barry K."/>
            <person name="Bruce D."/>
            <person name="Goodwin L."/>
            <person name="Glavina del Rio T."/>
            <person name="Dalin E."/>
            <person name="Tice H."/>
            <person name="Pitluck S."/>
            <person name="Chain P."/>
            <person name="Malfatti S."/>
            <person name="Shin M."/>
            <person name="Vergez L."/>
            <person name="Schmutz J."/>
            <person name="Larimer F."/>
            <person name="Land M."/>
            <person name="Hauser L."/>
            <person name="Kyrpides N."/>
            <person name="Mikhailova N."/>
            <person name="Tiedje J."/>
            <person name="Richardson P."/>
        </authorList>
    </citation>
    <scope>NUCLEOTIDE SEQUENCE [LARGE SCALE GENOMIC DNA]</scope>
    <source>
        <strain>MC0-3</strain>
    </source>
</reference>
<comment type="function">
    <text evidence="1">Catalyzes the phosphorolysis of diverse nucleosides, yielding D-ribose 1-phosphate and the respective free bases. Can use uridine, adenosine, guanosine, cytidine, thymidine, inosine and xanthosine as substrates. Also catalyzes the reverse reactions.</text>
</comment>
<comment type="catalytic activity">
    <reaction evidence="1">
        <text>a purine D-ribonucleoside + phosphate = a purine nucleobase + alpha-D-ribose 1-phosphate</text>
        <dbReference type="Rhea" id="RHEA:19805"/>
        <dbReference type="ChEBI" id="CHEBI:26386"/>
        <dbReference type="ChEBI" id="CHEBI:43474"/>
        <dbReference type="ChEBI" id="CHEBI:57720"/>
        <dbReference type="ChEBI" id="CHEBI:142355"/>
        <dbReference type="EC" id="2.4.2.1"/>
    </reaction>
</comment>
<comment type="catalytic activity">
    <reaction evidence="1">
        <text>adenosine + phosphate = alpha-D-ribose 1-phosphate + adenine</text>
        <dbReference type="Rhea" id="RHEA:27642"/>
        <dbReference type="ChEBI" id="CHEBI:16335"/>
        <dbReference type="ChEBI" id="CHEBI:16708"/>
        <dbReference type="ChEBI" id="CHEBI:43474"/>
        <dbReference type="ChEBI" id="CHEBI:57720"/>
        <dbReference type="EC" id="2.4.2.1"/>
    </reaction>
</comment>
<comment type="catalytic activity">
    <reaction evidence="1">
        <text>cytidine + phosphate = cytosine + alpha-D-ribose 1-phosphate</text>
        <dbReference type="Rhea" id="RHEA:52540"/>
        <dbReference type="ChEBI" id="CHEBI:16040"/>
        <dbReference type="ChEBI" id="CHEBI:17562"/>
        <dbReference type="ChEBI" id="CHEBI:43474"/>
        <dbReference type="ChEBI" id="CHEBI:57720"/>
        <dbReference type="EC" id="2.4.2.2"/>
    </reaction>
</comment>
<comment type="catalytic activity">
    <reaction evidence="1">
        <text>guanosine + phosphate = alpha-D-ribose 1-phosphate + guanine</text>
        <dbReference type="Rhea" id="RHEA:13233"/>
        <dbReference type="ChEBI" id="CHEBI:16235"/>
        <dbReference type="ChEBI" id="CHEBI:16750"/>
        <dbReference type="ChEBI" id="CHEBI:43474"/>
        <dbReference type="ChEBI" id="CHEBI:57720"/>
        <dbReference type="EC" id="2.4.2.1"/>
    </reaction>
</comment>
<comment type="catalytic activity">
    <reaction evidence="1">
        <text>inosine + phosphate = alpha-D-ribose 1-phosphate + hypoxanthine</text>
        <dbReference type="Rhea" id="RHEA:27646"/>
        <dbReference type="ChEBI" id="CHEBI:17368"/>
        <dbReference type="ChEBI" id="CHEBI:17596"/>
        <dbReference type="ChEBI" id="CHEBI:43474"/>
        <dbReference type="ChEBI" id="CHEBI:57720"/>
        <dbReference type="EC" id="2.4.2.1"/>
    </reaction>
</comment>
<comment type="catalytic activity">
    <reaction evidence="1">
        <text>thymidine + phosphate = 2-deoxy-alpha-D-ribose 1-phosphate + thymine</text>
        <dbReference type="Rhea" id="RHEA:16037"/>
        <dbReference type="ChEBI" id="CHEBI:17748"/>
        <dbReference type="ChEBI" id="CHEBI:17821"/>
        <dbReference type="ChEBI" id="CHEBI:43474"/>
        <dbReference type="ChEBI" id="CHEBI:57259"/>
        <dbReference type="EC" id="2.4.2.2"/>
    </reaction>
</comment>
<comment type="catalytic activity">
    <reaction evidence="1">
        <text>uridine + phosphate = alpha-D-ribose 1-phosphate + uracil</text>
        <dbReference type="Rhea" id="RHEA:24388"/>
        <dbReference type="ChEBI" id="CHEBI:16704"/>
        <dbReference type="ChEBI" id="CHEBI:17568"/>
        <dbReference type="ChEBI" id="CHEBI:43474"/>
        <dbReference type="ChEBI" id="CHEBI:57720"/>
        <dbReference type="EC" id="2.4.2.2"/>
    </reaction>
</comment>
<comment type="catalytic activity">
    <reaction evidence="1">
        <text>xanthosine + phosphate = alpha-D-ribose 1-phosphate + xanthine</text>
        <dbReference type="Rhea" id="RHEA:27638"/>
        <dbReference type="ChEBI" id="CHEBI:17712"/>
        <dbReference type="ChEBI" id="CHEBI:18107"/>
        <dbReference type="ChEBI" id="CHEBI:43474"/>
        <dbReference type="ChEBI" id="CHEBI:57720"/>
        <dbReference type="EC" id="2.4.2.1"/>
    </reaction>
</comment>
<comment type="similarity">
    <text evidence="1">Belongs to the nucleoside phosphorylase PpnP family.</text>
</comment>